<proteinExistence type="inferred from homology"/>
<keyword id="KW-0238">DNA-binding</keyword>
<keyword id="KW-0804">Transcription</keyword>
<keyword id="KW-0805">Transcription regulation</keyword>
<name>ARGP_ECOHS</name>
<organism>
    <name type="scientific">Escherichia coli O9:H4 (strain HS)</name>
    <dbReference type="NCBI Taxonomy" id="331112"/>
    <lineage>
        <taxon>Bacteria</taxon>
        <taxon>Pseudomonadati</taxon>
        <taxon>Pseudomonadota</taxon>
        <taxon>Gammaproteobacteria</taxon>
        <taxon>Enterobacterales</taxon>
        <taxon>Enterobacteriaceae</taxon>
        <taxon>Escherichia</taxon>
    </lineage>
</organism>
<comment type="function">
    <text evidence="1">Controls the transcription of genes involved in arginine and lysine metabolism.</text>
</comment>
<comment type="subunit">
    <text evidence="1">Homodimer.</text>
</comment>
<comment type="similarity">
    <text evidence="2">Belongs to the LysR transcriptional regulatory family.</text>
</comment>
<sequence>MKRPDYRTLQALDAVIRERGFERAAQKLCITQSAVSQRIKQLENMFGQPLLVRTVPPRPTEQGQKLLALLRQVELLEEEWLGDEQTGSTPLLLSLAVNADSLATWLLPALAPVLADSPIRLNLQVEDETRTQERLRRGEVVGAVSIQHQALPSCLVDKLGALDYLFVSSKPFAEKYFPNGVTRSALLKAPVVAFDHLDDMHQAFLQQNFDLPPGSVPCHIVNSSEAFVQLARQGTTCCMIPHLQIEKELASGELIDLTPGLFQRRMLYWHRFAPESRMMRKVTDALLDYGHKVLRQD</sequence>
<protein>
    <recommendedName>
        <fullName evidence="1">HTH-type transcriptional regulator ArgP</fullName>
    </recommendedName>
</protein>
<accession>A8A456</accession>
<dbReference type="EMBL" id="CP000802">
    <property type="protein sequence ID" value="ABV07310.1"/>
    <property type="molecule type" value="Genomic_DNA"/>
</dbReference>
<dbReference type="RefSeq" id="WP_000828351.1">
    <property type="nucleotide sequence ID" value="NC_009800.1"/>
</dbReference>
<dbReference type="SMR" id="A8A456"/>
<dbReference type="GeneID" id="93779084"/>
<dbReference type="KEGG" id="ecx:EcHS_A3074"/>
<dbReference type="HOGENOM" id="CLU_063829_0_0_6"/>
<dbReference type="GO" id="GO:0003677">
    <property type="term" value="F:DNA binding"/>
    <property type="evidence" value="ECO:0007669"/>
    <property type="project" value="UniProtKB-UniRule"/>
</dbReference>
<dbReference type="GO" id="GO:0003700">
    <property type="term" value="F:DNA-binding transcription factor activity"/>
    <property type="evidence" value="ECO:0007669"/>
    <property type="project" value="UniProtKB-UniRule"/>
</dbReference>
<dbReference type="CDD" id="cd08428">
    <property type="entry name" value="PBP2_IciA_ArgP"/>
    <property type="match status" value="1"/>
</dbReference>
<dbReference type="FunFam" id="1.10.10.10:FF:000061">
    <property type="entry name" value="HTH-type transcriptional regulator ArgP"/>
    <property type="match status" value="1"/>
</dbReference>
<dbReference type="FunFam" id="3.40.190.290:FF:000002">
    <property type="entry name" value="HTH-type transcriptional regulator ArgP"/>
    <property type="match status" value="1"/>
</dbReference>
<dbReference type="Gene3D" id="3.40.190.290">
    <property type="match status" value="1"/>
</dbReference>
<dbReference type="Gene3D" id="1.10.10.10">
    <property type="entry name" value="Winged helix-like DNA-binding domain superfamily/Winged helix DNA-binding domain"/>
    <property type="match status" value="1"/>
</dbReference>
<dbReference type="HAMAP" id="MF_00513">
    <property type="entry name" value="HTH_type_ArgP"/>
    <property type="match status" value="1"/>
</dbReference>
<dbReference type="InterPro" id="IPR017685">
    <property type="entry name" value="ArgP"/>
</dbReference>
<dbReference type="InterPro" id="IPR023490">
    <property type="entry name" value="ArgP_gammaproteobact"/>
</dbReference>
<dbReference type="InterPro" id="IPR050176">
    <property type="entry name" value="LTTR"/>
</dbReference>
<dbReference type="InterPro" id="IPR005119">
    <property type="entry name" value="LysR_subst-bd"/>
</dbReference>
<dbReference type="InterPro" id="IPR000847">
    <property type="entry name" value="Tscrpt_reg_HTH_LysR"/>
</dbReference>
<dbReference type="InterPro" id="IPR036388">
    <property type="entry name" value="WH-like_DNA-bd_sf"/>
</dbReference>
<dbReference type="InterPro" id="IPR036390">
    <property type="entry name" value="WH_DNA-bd_sf"/>
</dbReference>
<dbReference type="NCBIfam" id="TIGR03298">
    <property type="entry name" value="argP"/>
    <property type="match status" value="1"/>
</dbReference>
<dbReference type="NCBIfam" id="NF002964">
    <property type="entry name" value="PRK03635.1"/>
    <property type="match status" value="1"/>
</dbReference>
<dbReference type="NCBIfam" id="NF009888">
    <property type="entry name" value="PRK13348.1"/>
    <property type="match status" value="1"/>
</dbReference>
<dbReference type="PANTHER" id="PTHR30579:SF2">
    <property type="entry name" value="HTH-TYPE TRANSCRIPTIONAL REGULATOR ARGP"/>
    <property type="match status" value="1"/>
</dbReference>
<dbReference type="PANTHER" id="PTHR30579">
    <property type="entry name" value="TRANSCRIPTIONAL REGULATOR"/>
    <property type="match status" value="1"/>
</dbReference>
<dbReference type="Pfam" id="PF00126">
    <property type="entry name" value="HTH_1"/>
    <property type="match status" value="1"/>
</dbReference>
<dbReference type="Pfam" id="PF03466">
    <property type="entry name" value="LysR_substrate"/>
    <property type="match status" value="1"/>
</dbReference>
<dbReference type="PRINTS" id="PR00039">
    <property type="entry name" value="HTHLYSR"/>
</dbReference>
<dbReference type="SUPFAM" id="SSF53850">
    <property type="entry name" value="Periplasmic binding protein-like II"/>
    <property type="match status" value="1"/>
</dbReference>
<dbReference type="SUPFAM" id="SSF46785">
    <property type="entry name" value="Winged helix' DNA-binding domain"/>
    <property type="match status" value="1"/>
</dbReference>
<dbReference type="PROSITE" id="PS50931">
    <property type="entry name" value="HTH_LYSR"/>
    <property type="match status" value="1"/>
</dbReference>
<feature type="chain" id="PRO_1000060876" description="HTH-type transcriptional regulator ArgP">
    <location>
        <begin position="1"/>
        <end position="297"/>
    </location>
</feature>
<feature type="domain" description="HTH lysR-type" evidence="1">
    <location>
        <begin position="4"/>
        <end position="60"/>
    </location>
</feature>
<feature type="DNA-binding region" description="H-T-H motif" evidence="1">
    <location>
        <begin position="21"/>
        <end position="40"/>
    </location>
</feature>
<gene>
    <name evidence="1" type="primary">argP</name>
    <name type="synonym">iciA</name>
    <name type="ordered locus">EcHS_A3074</name>
</gene>
<reference key="1">
    <citation type="journal article" date="2008" name="J. Bacteriol.">
        <title>The pangenome structure of Escherichia coli: comparative genomic analysis of E. coli commensal and pathogenic isolates.</title>
        <authorList>
            <person name="Rasko D.A."/>
            <person name="Rosovitz M.J."/>
            <person name="Myers G.S.A."/>
            <person name="Mongodin E.F."/>
            <person name="Fricke W.F."/>
            <person name="Gajer P."/>
            <person name="Crabtree J."/>
            <person name="Sebaihia M."/>
            <person name="Thomson N.R."/>
            <person name="Chaudhuri R."/>
            <person name="Henderson I.R."/>
            <person name="Sperandio V."/>
            <person name="Ravel J."/>
        </authorList>
    </citation>
    <scope>NUCLEOTIDE SEQUENCE [LARGE SCALE GENOMIC DNA]</scope>
    <source>
        <strain>HS</strain>
    </source>
</reference>
<evidence type="ECO:0000255" key="1">
    <source>
        <dbReference type="HAMAP-Rule" id="MF_00513"/>
    </source>
</evidence>
<evidence type="ECO:0000305" key="2"/>